<gene>
    <name type="primary">cat-1</name>
    <name type="ORF">NCU08791</name>
</gene>
<keyword id="KW-0002">3D-structure</keyword>
<keyword id="KW-0134">Cell wall</keyword>
<keyword id="KW-0903">Direct protein sequencing</keyword>
<keyword id="KW-0325">Glycoprotein</keyword>
<keyword id="KW-0349">Heme</keyword>
<keyword id="KW-0376">Hydrogen peroxide</keyword>
<keyword id="KW-0408">Iron</keyword>
<keyword id="KW-0479">Metal-binding</keyword>
<keyword id="KW-0560">Oxidoreductase</keyword>
<keyword id="KW-0575">Peroxidase</keyword>
<keyword id="KW-1185">Reference proteome</keyword>
<keyword id="KW-0964">Secreted</keyword>
<keyword id="KW-0883">Thioether bond</keyword>
<dbReference type="EC" id="1.11.1.6"/>
<dbReference type="EMBL" id="AY027545">
    <property type="protein sequence ID" value="AAK15808.2"/>
    <property type="molecule type" value="Genomic_DNA"/>
</dbReference>
<dbReference type="EMBL" id="CM002238">
    <property type="protein sequence ID" value="EAA26998.1"/>
    <property type="status" value="ALT_INIT"/>
    <property type="molecule type" value="Genomic_DNA"/>
</dbReference>
<dbReference type="RefSeq" id="XP_956234.1">
    <property type="nucleotide sequence ID" value="XM_951141.3"/>
</dbReference>
<dbReference type="PDB" id="1SY7">
    <property type="method" value="X-ray"/>
    <property type="resolution" value="1.75 A"/>
    <property type="chains" value="A/B=22-736"/>
</dbReference>
<dbReference type="PDBsum" id="1SY7"/>
<dbReference type="SMR" id="Q9C168"/>
<dbReference type="IntAct" id="Q9C168">
    <property type="interactions" value="1"/>
</dbReference>
<dbReference type="MINT" id="Q9C168"/>
<dbReference type="STRING" id="367110.Q9C168"/>
<dbReference type="PeroxiBase" id="5207">
    <property type="entry name" value="NcKat01"/>
</dbReference>
<dbReference type="PaxDb" id="5141-EFNCRP00000004624"/>
<dbReference type="EnsemblFungi" id="EAA26998">
    <property type="protein sequence ID" value="EAA26998"/>
    <property type="gene ID" value="NCU08791"/>
</dbReference>
<dbReference type="GeneID" id="3872372"/>
<dbReference type="KEGG" id="ncr:NCU08791"/>
<dbReference type="HOGENOM" id="CLU_010645_3_0_1"/>
<dbReference type="InParanoid" id="Q9C168"/>
<dbReference type="OrthoDB" id="6880011at2759"/>
<dbReference type="BRENDA" id="1.11.1.6">
    <property type="organism ID" value="3627"/>
</dbReference>
<dbReference type="SABIO-RK" id="Q9C168"/>
<dbReference type="EvolutionaryTrace" id="Q9C168"/>
<dbReference type="Proteomes" id="UP000001805">
    <property type="component" value="Chromosome 3, Linkage Group III"/>
</dbReference>
<dbReference type="GO" id="GO:0005619">
    <property type="term" value="C:ascospore wall"/>
    <property type="evidence" value="ECO:0000314"/>
    <property type="project" value="UniProtKB"/>
</dbReference>
<dbReference type="GO" id="GO:0005829">
    <property type="term" value="C:cytosol"/>
    <property type="evidence" value="ECO:0000318"/>
    <property type="project" value="GO_Central"/>
</dbReference>
<dbReference type="GO" id="GO:0005576">
    <property type="term" value="C:extracellular region"/>
    <property type="evidence" value="ECO:0007669"/>
    <property type="project" value="UniProtKB-KW"/>
</dbReference>
<dbReference type="GO" id="GO:0004096">
    <property type="term" value="F:catalase activity"/>
    <property type="evidence" value="ECO:0000314"/>
    <property type="project" value="UniProtKB"/>
</dbReference>
<dbReference type="GO" id="GO:0020037">
    <property type="term" value="F:heme binding"/>
    <property type="evidence" value="ECO:0000314"/>
    <property type="project" value="UniProtKB"/>
</dbReference>
<dbReference type="GO" id="GO:0046872">
    <property type="term" value="F:metal ion binding"/>
    <property type="evidence" value="ECO:0007669"/>
    <property type="project" value="UniProtKB-KW"/>
</dbReference>
<dbReference type="GO" id="GO:0048315">
    <property type="term" value="P:conidium formation"/>
    <property type="evidence" value="ECO:0000314"/>
    <property type="project" value="UniProtKB"/>
</dbReference>
<dbReference type="GO" id="GO:0042744">
    <property type="term" value="P:hydrogen peroxide catabolic process"/>
    <property type="evidence" value="ECO:0000318"/>
    <property type="project" value="GO_Central"/>
</dbReference>
<dbReference type="GO" id="GO:0006979">
    <property type="term" value="P:response to oxidative stress"/>
    <property type="evidence" value="ECO:0000318"/>
    <property type="project" value="GO_Central"/>
</dbReference>
<dbReference type="CDD" id="cd08155">
    <property type="entry name" value="catalase_clade_2"/>
    <property type="match status" value="1"/>
</dbReference>
<dbReference type="CDD" id="cd03132">
    <property type="entry name" value="GATase1_catalase"/>
    <property type="match status" value="1"/>
</dbReference>
<dbReference type="FunFam" id="2.40.180.10:FF:000003">
    <property type="entry name" value="Catalase"/>
    <property type="match status" value="1"/>
</dbReference>
<dbReference type="FunFam" id="3.40.50.880:FF:000050">
    <property type="entry name" value="Catalase"/>
    <property type="match status" value="1"/>
</dbReference>
<dbReference type="FunFam" id="1.20.1370.20:FF:000001">
    <property type="entry name" value="Catalase HPII"/>
    <property type="match status" value="1"/>
</dbReference>
<dbReference type="Gene3D" id="1.20.1370.20">
    <property type="match status" value="1"/>
</dbReference>
<dbReference type="Gene3D" id="3.40.50.880">
    <property type="match status" value="1"/>
</dbReference>
<dbReference type="Gene3D" id="2.40.180.10">
    <property type="entry name" value="Catalase core domain"/>
    <property type="match status" value="1"/>
</dbReference>
<dbReference type="InterPro" id="IPR018028">
    <property type="entry name" value="Catalase"/>
</dbReference>
<dbReference type="InterPro" id="IPR024708">
    <property type="entry name" value="Catalase_AS"/>
</dbReference>
<dbReference type="InterPro" id="IPR024712">
    <property type="entry name" value="Catalase_clade2"/>
</dbReference>
<dbReference type="InterPro" id="IPR043156">
    <property type="entry name" value="Catalase_clade2_helical"/>
</dbReference>
<dbReference type="InterPro" id="IPR011614">
    <property type="entry name" value="Catalase_core"/>
</dbReference>
<dbReference type="InterPro" id="IPR002226">
    <property type="entry name" value="Catalase_haem_BS"/>
</dbReference>
<dbReference type="InterPro" id="IPR010582">
    <property type="entry name" value="Catalase_immune_responsive"/>
</dbReference>
<dbReference type="InterPro" id="IPR041399">
    <property type="entry name" value="Catalase_large_C"/>
</dbReference>
<dbReference type="InterPro" id="IPR020835">
    <property type="entry name" value="Catalase_sf"/>
</dbReference>
<dbReference type="InterPro" id="IPR029062">
    <property type="entry name" value="Class_I_gatase-like"/>
</dbReference>
<dbReference type="InterPro" id="IPR002818">
    <property type="entry name" value="DJ-1/PfpI"/>
</dbReference>
<dbReference type="PANTHER" id="PTHR42821">
    <property type="entry name" value="CATALASE"/>
    <property type="match status" value="1"/>
</dbReference>
<dbReference type="PANTHER" id="PTHR42821:SF1">
    <property type="entry name" value="CATALASE-B"/>
    <property type="match status" value="1"/>
</dbReference>
<dbReference type="Pfam" id="PF00199">
    <property type="entry name" value="Catalase"/>
    <property type="match status" value="1"/>
</dbReference>
<dbReference type="Pfam" id="PF06628">
    <property type="entry name" value="Catalase-rel"/>
    <property type="match status" value="1"/>
</dbReference>
<dbReference type="Pfam" id="PF01965">
    <property type="entry name" value="DJ-1_PfpI"/>
    <property type="match status" value="1"/>
</dbReference>
<dbReference type="PIRSF" id="PIRSF038927">
    <property type="entry name" value="Catalase_clade2"/>
    <property type="match status" value="1"/>
</dbReference>
<dbReference type="PRINTS" id="PR00067">
    <property type="entry name" value="CATALASE"/>
</dbReference>
<dbReference type="SMART" id="SM01060">
    <property type="entry name" value="Catalase"/>
    <property type="match status" value="1"/>
</dbReference>
<dbReference type="SUPFAM" id="SSF52317">
    <property type="entry name" value="Class I glutamine amidotransferase-like"/>
    <property type="match status" value="1"/>
</dbReference>
<dbReference type="SUPFAM" id="SSF56634">
    <property type="entry name" value="Heme-dependent catalase-like"/>
    <property type="match status" value="1"/>
</dbReference>
<dbReference type="PROSITE" id="PS00437">
    <property type="entry name" value="CATALASE_1"/>
    <property type="match status" value="1"/>
</dbReference>
<dbReference type="PROSITE" id="PS00438">
    <property type="entry name" value="CATALASE_2"/>
    <property type="match status" value="1"/>
</dbReference>
<dbReference type="PROSITE" id="PS51402">
    <property type="entry name" value="CATALASE_3"/>
    <property type="match status" value="1"/>
</dbReference>
<organism>
    <name type="scientific">Neurospora crassa (strain ATCC 24698 / 74-OR23-1A / CBS 708.71 / DSM 1257 / FGSC 987)</name>
    <dbReference type="NCBI Taxonomy" id="367110"/>
    <lineage>
        <taxon>Eukaryota</taxon>
        <taxon>Fungi</taxon>
        <taxon>Dikarya</taxon>
        <taxon>Ascomycota</taxon>
        <taxon>Pezizomycotina</taxon>
        <taxon>Sordariomycetes</taxon>
        <taxon>Sordariomycetidae</taxon>
        <taxon>Sordariales</taxon>
        <taxon>Sordariaceae</taxon>
        <taxon>Neurospora</taxon>
    </lineage>
</organism>
<comment type="function">
    <text evidence="1">Occurs in almost all aerobically respiring organisms and serves to protect cells from the toxic effects of hydrogen peroxide.</text>
</comment>
<comment type="catalytic activity">
    <reaction evidence="2 4 5">
        <text>2 H2O2 = O2 + 2 H2O</text>
        <dbReference type="Rhea" id="RHEA:20309"/>
        <dbReference type="ChEBI" id="CHEBI:15377"/>
        <dbReference type="ChEBI" id="CHEBI:15379"/>
        <dbReference type="ChEBI" id="CHEBI:16240"/>
        <dbReference type="EC" id="1.11.1.6"/>
    </reaction>
</comment>
<comment type="cofactor">
    <cofactor evidence="6">
        <name>heme</name>
        <dbReference type="ChEBI" id="CHEBI:30413"/>
    </cofactor>
</comment>
<comment type="biophysicochemical properties">
    <phDependence>
        <text evidence="4">Active from pH 4 to 12.</text>
    </phDependence>
</comment>
<comment type="subunit">
    <text evidence="4 6">Homotetramer.</text>
</comment>
<comment type="subcellular location">
    <subcellularLocation>
        <location evidence="4">Secreted</location>
        <location evidence="4">Cell wall</location>
    </subcellularLocation>
    <text>Principally associated with the cell wall of conidia.</text>
</comment>
<comment type="developmental stage">
    <text evidence="5">Main catalase activity in conidia, during germination of conidia, and initial growth.</text>
</comment>
<comment type="induction">
    <text evidence="4 5">During prestationary growth. By ethanol and in the presence of air by heat shock. Inactivated by isopropanol and 20 mM 3-amino-1,2,4-triazole.</text>
</comment>
<comment type="PTM">
    <text evidence="4">Glycosylated; with alpha-glucose and/or alpha-mannose.</text>
</comment>
<comment type="similarity">
    <text evidence="7">Belongs to the catalase family.</text>
</comment>
<comment type="sequence caution" evidence="7">
    <conflict type="erroneous initiation">
        <sequence resource="EMBL-CDS" id="EAA26998"/>
    </conflict>
</comment>
<protein>
    <recommendedName>
        <fullName>Catalase-1</fullName>
        <ecNumber>1.11.1.6</ecNumber>
    </recommendedName>
</protein>
<evidence type="ECO:0000250" key="1"/>
<evidence type="ECO:0000255" key="2">
    <source>
        <dbReference type="PROSITE-ProRule" id="PRU10013"/>
    </source>
</evidence>
<evidence type="ECO:0000256" key="3">
    <source>
        <dbReference type="SAM" id="MobiDB-lite"/>
    </source>
</evidence>
<evidence type="ECO:0000269" key="4">
    <source>
    </source>
</evidence>
<evidence type="ECO:0000269" key="5">
    <source>
    </source>
</evidence>
<evidence type="ECO:0000269" key="6">
    <source>
    </source>
</evidence>
<evidence type="ECO:0000305" key="7"/>
<evidence type="ECO:0007829" key="8">
    <source>
        <dbReference type="PDB" id="1SY7"/>
    </source>
</evidence>
<reference key="1">
    <citation type="journal article" date="2002" name="Free Radic. Biol. Med.">
        <title>Regulation and oxidation of two large monofunctional catalases.</title>
        <authorList>
            <person name="Michan S."/>
            <person name="Lledias F."/>
            <person name="Baldwin J.D."/>
            <person name="Natvig D.O."/>
            <person name="Hansberg W."/>
        </authorList>
    </citation>
    <scope>NUCLEOTIDE SEQUENCE [GENOMIC DNA]</scope>
    <scope>PROTEIN SEQUENCE OF 48-60; 152-167 AND 254-266</scope>
    <scope>CATALYTIC ACTIVITY</scope>
    <scope>DEVELOPMENTAL STAGE</scope>
    <scope>INDUCTION</scope>
    <source>
        <strain>ATCC 24698 / 74-OR23-1A / CBS 708.71 / DSM 1257 / FGSC 987</strain>
        <tissue>Conidium</tissue>
    </source>
</reference>
<reference key="2">
    <citation type="submission" date="2004-07" db="EMBL/GenBank/DDBJ databases">
        <authorList>
            <person name="Michan S."/>
            <person name="Ebbole D."/>
            <person name="Hansberg W."/>
        </authorList>
    </citation>
    <scope>SEQUENCE REVISION TO N-TERMINUS</scope>
</reference>
<reference key="3">
    <citation type="journal article" date="2003" name="Nature">
        <title>The genome sequence of the filamentous fungus Neurospora crassa.</title>
        <authorList>
            <person name="Galagan J.E."/>
            <person name="Calvo S.E."/>
            <person name="Borkovich K.A."/>
            <person name="Selker E.U."/>
            <person name="Read N.D."/>
            <person name="Jaffe D.B."/>
            <person name="FitzHugh W."/>
            <person name="Ma L.-J."/>
            <person name="Smirnov S."/>
            <person name="Purcell S."/>
            <person name="Rehman B."/>
            <person name="Elkins T."/>
            <person name="Engels R."/>
            <person name="Wang S."/>
            <person name="Nielsen C.B."/>
            <person name="Butler J."/>
            <person name="Endrizzi M."/>
            <person name="Qui D."/>
            <person name="Ianakiev P."/>
            <person name="Bell-Pedersen D."/>
            <person name="Nelson M.A."/>
            <person name="Werner-Washburne M."/>
            <person name="Selitrennikoff C.P."/>
            <person name="Kinsey J.A."/>
            <person name="Braun E.L."/>
            <person name="Zelter A."/>
            <person name="Schulte U."/>
            <person name="Kothe G.O."/>
            <person name="Jedd G."/>
            <person name="Mewes H.-W."/>
            <person name="Staben C."/>
            <person name="Marcotte E."/>
            <person name="Greenberg D."/>
            <person name="Roy A."/>
            <person name="Foley K."/>
            <person name="Naylor J."/>
            <person name="Stange-Thomann N."/>
            <person name="Barrett R."/>
            <person name="Gnerre S."/>
            <person name="Kamal M."/>
            <person name="Kamvysselis M."/>
            <person name="Mauceli E.W."/>
            <person name="Bielke C."/>
            <person name="Rudd S."/>
            <person name="Frishman D."/>
            <person name="Krystofova S."/>
            <person name="Rasmussen C."/>
            <person name="Metzenberg R.L."/>
            <person name="Perkins D.D."/>
            <person name="Kroken S."/>
            <person name="Cogoni C."/>
            <person name="Macino G."/>
            <person name="Catcheside D.E.A."/>
            <person name="Li W."/>
            <person name="Pratt R.J."/>
            <person name="Osmani S.A."/>
            <person name="DeSouza C.P.C."/>
            <person name="Glass N.L."/>
            <person name="Orbach M.J."/>
            <person name="Berglund J.A."/>
            <person name="Voelker R."/>
            <person name="Yarden O."/>
            <person name="Plamann M."/>
            <person name="Seiler S."/>
            <person name="Dunlap J.C."/>
            <person name="Radford A."/>
            <person name="Aramayo R."/>
            <person name="Natvig D.O."/>
            <person name="Alex L.A."/>
            <person name="Mannhaupt G."/>
            <person name="Ebbole D.J."/>
            <person name="Freitag M."/>
            <person name="Paulsen I."/>
            <person name="Sachs M.S."/>
            <person name="Lander E.S."/>
            <person name="Nusbaum C."/>
            <person name="Birren B.W."/>
        </authorList>
    </citation>
    <scope>NUCLEOTIDE SEQUENCE [LARGE SCALE GENOMIC DNA]</scope>
    <source>
        <strain>ATCC 24698 / 74-OR23-1A / CBS 708.71 / DSM 1257 / FGSC 987</strain>
    </source>
</reference>
<reference key="4">
    <citation type="journal article" date="2001" name="Free Radic. Biol. Med.">
        <title>Molecular and kinetic study of catalase-1, a durable large catalase of Neurospora crassa.</title>
        <authorList>
            <person name="Diaz A."/>
            <person name="Rangel P."/>
            <person name="Montes de Oca Y."/>
            <person name="Lledias F."/>
            <person name="Hansberg W."/>
        </authorList>
    </citation>
    <scope>CATALYTIC ACTIVITY</scope>
    <scope>BIOPHYSICOCHEMICAL PROPERTIES</scope>
    <scope>SUBUNIT</scope>
    <scope>SUBCELLULAR LOCATION</scope>
    <scope>INDUCTION</scope>
    <scope>GLYCOSYLATION</scope>
</reference>
<reference key="5">
    <citation type="journal article" date="2004" name="J. Mol. Biol.">
        <title>Unusual Cys-Tyr covalent bond in a large catalase.</title>
        <authorList>
            <person name="Diaz A."/>
            <person name="Horjales E."/>
            <person name="Rudino-Pinera E."/>
            <person name="Arreola R."/>
            <person name="Hansberg W."/>
        </authorList>
    </citation>
    <scope>X-RAY CRYSTALLOGRAPHY (1.75 ANGSTROMS) OF 22-736 IN COMPLEX WITH COFACTOR</scope>
    <scope>ACTIVE SITE</scope>
    <scope>CROSS-LINK</scope>
</reference>
<name>CAT1_NEUCR</name>
<feature type="chain" id="PRO_0000084923" description="Catalase-1">
    <location>
        <begin position="1"/>
        <end position="736"/>
    </location>
</feature>
<feature type="region of interest" description="Disordered" evidence="3">
    <location>
        <begin position="1"/>
        <end position="29"/>
    </location>
</feature>
<feature type="active site" evidence="2 6">
    <location>
        <position position="92"/>
    </location>
</feature>
<feature type="active site" evidence="2 6">
    <location>
        <position position="165"/>
    </location>
</feature>
<feature type="binding site" evidence="6">
    <location>
        <position position="89"/>
    </location>
    <ligand>
        <name>heme</name>
        <dbReference type="ChEBI" id="CHEBI:30413"/>
    </ligand>
</feature>
<feature type="binding site" evidence="6">
    <location>
        <position position="129"/>
    </location>
    <ligand>
        <name>heme</name>
        <dbReference type="ChEBI" id="CHEBI:30413"/>
    </ligand>
</feature>
<feature type="binding site" evidence="6">
    <location>
        <position position="178"/>
    </location>
    <ligand>
        <name>heme</name>
        <dbReference type="ChEBI" id="CHEBI:30413"/>
    </ligand>
</feature>
<feature type="binding site" evidence="6">
    <location>
        <position position="375"/>
    </location>
    <ligand>
        <name>heme</name>
        <dbReference type="ChEBI" id="CHEBI:30413"/>
    </ligand>
</feature>
<feature type="binding site" description="axial binding residue" evidence="6">
    <location>
        <position position="379"/>
    </location>
    <ligand>
        <name>heme</name>
        <dbReference type="ChEBI" id="CHEBI:30413"/>
    </ligand>
    <ligandPart>
        <name>Fe</name>
        <dbReference type="ChEBI" id="CHEBI:18248"/>
    </ligandPart>
</feature>
<feature type="binding site" evidence="6">
    <location>
        <position position="386"/>
    </location>
    <ligand>
        <name>heme</name>
        <dbReference type="ChEBI" id="CHEBI:30413"/>
    </ligand>
</feature>
<feature type="cross-link" description="3-(S-cysteinyl)-tyrosine (Cys-Tyr)" evidence="6">
    <location>
        <begin position="356"/>
        <end position="379"/>
    </location>
</feature>
<feature type="strand" evidence="8">
    <location>
        <begin position="57"/>
        <end position="59"/>
    </location>
</feature>
<feature type="strand" evidence="8">
    <location>
        <begin position="64"/>
        <end position="67"/>
    </location>
</feature>
<feature type="helix" evidence="8">
    <location>
        <begin position="72"/>
        <end position="82"/>
    </location>
</feature>
<feature type="strand" evidence="8">
    <location>
        <begin position="90"/>
        <end position="92"/>
    </location>
</feature>
<feature type="strand" evidence="8">
    <location>
        <begin position="94"/>
        <end position="106"/>
    </location>
</feature>
<feature type="turn" evidence="8">
    <location>
        <begin position="109"/>
        <end position="111"/>
    </location>
</feature>
<feature type="helix" evidence="8">
    <location>
        <begin position="115"/>
        <end position="117"/>
    </location>
</feature>
<feature type="strand" evidence="8">
    <location>
        <begin position="124"/>
        <end position="131"/>
    </location>
</feature>
<feature type="strand" evidence="8">
    <location>
        <begin position="133"/>
        <end position="135"/>
    </location>
</feature>
<feature type="strand" evidence="8">
    <location>
        <begin position="143"/>
        <end position="145"/>
    </location>
</feature>
<feature type="strand" evidence="8">
    <location>
        <begin position="148"/>
        <end position="155"/>
    </location>
</feature>
<feature type="strand" evidence="8">
    <location>
        <begin position="158"/>
        <end position="169"/>
    </location>
</feature>
<feature type="helix" evidence="8">
    <location>
        <begin position="175"/>
        <end position="177"/>
    </location>
</feature>
<feature type="helix" evidence="8">
    <location>
        <begin position="178"/>
        <end position="185"/>
    </location>
</feature>
<feature type="turn" evidence="8">
    <location>
        <begin position="189"/>
        <end position="192"/>
    </location>
</feature>
<feature type="helix" evidence="8">
    <location>
        <begin position="201"/>
        <end position="209"/>
    </location>
</feature>
<feature type="helix" evidence="8">
    <location>
        <begin position="211"/>
        <end position="213"/>
    </location>
</feature>
<feature type="helix" evidence="8">
    <location>
        <begin position="214"/>
        <end position="220"/>
    </location>
</feature>
<feature type="helix" evidence="8">
    <location>
        <begin position="223"/>
        <end position="225"/>
    </location>
</feature>
<feature type="strand" evidence="8">
    <location>
        <begin position="226"/>
        <end position="228"/>
    </location>
</feature>
<feature type="helix" evidence="8">
    <location>
        <begin position="230"/>
        <end position="232"/>
    </location>
</feature>
<feature type="strand" evidence="8">
    <location>
        <begin position="241"/>
        <end position="244"/>
    </location>
</feature>
<feature type="strand" evidence="8">
    <location>
        <begin position="250"/>
        <end position="259"/>
    </location>
</feature>
<feature type="helix" evidence="8">
    <location>
        <begin position="268"/>
        <end position="277"/>
    </location>
</feature>
<feature type="helix" evidence="8">
    <location>
        <begin position="281"/>
        <end position="291"/>
    </location>
</feature>
<feature type="strand" evidence="8">
    <location>
        <begin position="297"/>
        <end position="306"/>
    </location>
</feature>
<feature type="helix" evidence="8">
    <location>
        <begin position="307"/>
        <end position="309"/>
    </location>
</feature>
<feature type="strand" evidence="8">
    <location>
        <begin position="313"/>
        <end position="315"/>
    </location>
</feature>
<feature type="turn" evidence="8">
    <location>
        <begin position="326"/>
        <end position="328"/>
    </location>
</feature>
<feature type="strand" evidence="8">
    <location>
        <begin position="332"/>
        <end position="341"/>
    </location>
</feature>
<feature type="helix" evidence="8">
    <location>
        <begin position="346"/>
        <end position="349"/>
    </location>
</feature>
<feature type="turn" evidence="8">
    <location>
        <begin position="350"/>
        <end position="352"/>
    </location>
</feature>
<feature type="helix" evidence="8">
    <location>
        <begin position="372"/>
        <end position="381"/>
    </location>
</feature>
<feature type="helix" evidence="8">
    <location>
        <begin position="383"/>
        <end position="386"/>
    </location>
</feature>
<feature type="helix" evidence="8">
    <location>
        <begin position="391"/>
        <end position="393"/>
    </location>
</feature>
<feature type="turn" evidence="8">
    <location>
        <begin position="395"/>
        <end position="397"/>
    </location>
</feature>
<feature type="strand" evidence="8">
    <location>
        <begin position="423"/>
        <end position="425"/>
    </location>
</feature>
<feature type="turn" evidence="8">
    <location>
        <begin position="436"/>
        <end position="439"/>
    </location>
</feature>
<feature type="helix" evidence="8">
    <location>
        <begin position="458"/>
        <end position="461"/>
    </location>
</feature>
<feature type="helix" evidence="8">
    <location>
        <begin position="465"/>
        <end position="473"/>
    </location>
</feature>
<feature type="helix" evidence="8">
    <location>
        <begin position="476"/>
        <end position="491"/>
    </location>
</feature>
<feature type="helix" evidence="8">
    <location>
        <begin position="496"/>
        <end position="506"/>
    </location>
</feature>
<feature type="turn" evidence="8">
    <location>
        <begin position="507"/>
        <end position="509"/>
    </location>
</feature>
<feature type="helix" evidence="8">
    <location>
        <begin position="511"/>
        <end position="521"/>
    </location>
</feature>
<feature type="helix" evidence="8">
    <location>
        <begin position="543"/>
        <end position="545"/>
    </location>
</feature>
<feature type="strand" evidence="8">
    <location>
        <begin position="549"/>
        <end position="551"/>
    </location>
</feature>
<feature type="strand" evidence="8">
    <location>
        <begin position="557"/>
        <end position="561"/>
    </location>
</feature>
<feature type="helix" evidence="8">
    <location>
        <begin position="568"/>
        <end position="580"/>
    </location>
</feature>
<feature type="strand" evidence="8">
    <location>
        <begin position="584"/>
        <end position="590"/>
    </location>
</feature>
<feature type="strand" evidence="8">
    <location>
        <begin position="595"/>
        <end position="597"/>
    </location>
</feature>
<feature type="strand" evidence="8">
    <location>
        <begin position="606"/>
        <end position="608"/>
    </location>
</feature>
<feature type="turn" evidence="8">
    <location>
        <begin position="609"/>
        <end position="611"/>
    </location>
</feature>
<feature type="helix" evidence="8">
    <location>
        <begin position="614"/>
        <end position="616"/>
    </location>
</feature>
<feature type="strand" evidence="8">
    <location>
        <begin position="617"/>
        <end position="622"/>
    </location>
</feature>
<feature type="helix" evidence="8">
    <location>
        <begin position="626"/>
        <end position="633"/>
    </location>
</feature>
<feature type="helix" evidence="8">
    <location>
        <begin position="636"/>
        <end position="647"/>
    </location>
</feature>
<feature type="strand" evidence="8">
    <location>
        <begin position="651"/>
        <end position="655"/>
    </location>
</feature>
<feature type="helix" evidence="8">
    <location>
        <begin position="658"/>
        <end position="666"/>
    </location>
</feature>
<feature type="strand" evidence="8">
    <location>
        <begin position="676"/>
        <end position="678"/>
    </location>
</feature>
<feature type="strand" evidence="8">
    <location>
        <begin position="680"/>
        <end position="682"/>
    </location>
</feature>
<feature type="strand" evidence="8">
    <location>
        <begin position="685"/>
        <end position="690"/>
    </location>
</feature>
<feature type="turn" evidence="8">
    <location>
        <begin position="693"/>
        <end position="697"/>
    </location>
</feature>
<feature type="helix" evidence="8">
    <location>
        <begin position="709"/>
        <end position="718"/>
    </location>
</feature>
<feature type="helix" evidence="8">
    <location>
        <begin position="723"/>
        <end position="727"/>
    </location>
</feature>
<feature type="helix" evidence="8">
    <location>
        <begin position="731"/>
        <end position="733"/>
    </location>
</feature>
<accession>Q9C168</accession>
<accession>Q7RUZ1</accession>
<proteinExistence type="evidence at protein level"/>
<sequence>MSNIISQAGQKAKEALTSAPSSKKVDDLKNEFKETDKSARLTTDYGVKQTTADDWLRIVSDDKIGPSLLEDPFARERIMRFDHERIPERVVHARGSGAFGKFKVYESASDLTMAPVLTDTSRETPVFVRFSTVLGSRGSADTVRDVRGFAVKFYTEEGNWDLVGNNIPVFFIQDAIKFPDVIHAGKPEPHNEVPQAQSAHNNFWDFQFNHTEATHMFTWAMSDRAIPRSLRMMQGFGVNTYTLINAQGKRHFVKFHWTPELGVHSLVWDEALKLAGQDPDFHRKDLWEAIENGAYPKWKFGIQAIAEEDEHKFDFDILDATKIWPEDLVPVRYIGEMELNRNPDEFFPQTEQIAFCTSHVVNGIGFSDDPLLQGRNFSYFDTQISRLGVNFQELPINRPVCPVMNFNRDGAMRHTISRGTVNYYPNRFDACPPASLKEGGYLEYAQKVAGIKARARSAKFKEHFSQAQLFYNSMSPIEKQHMINAFGFELDHCEDPVVYGRMVQRLADIDLGLAQTIAEMVGGEAPTTTNHPNHGRKTINLSQTEFPPATPTIKSRRVAIIIADGYDNVAYDAAYAAISANQAIPLVIGPRRSKVTAANGSTVQPHHHLEGFRSTMVDAIFIPGGAKAAETLSKNGRALHWIREAFGHLKAIGATGEAVDLVAKAIALPQVTVSSEAEVHESYGVVTLKKVKPESFTDAVKIAKGAAGFLGEFFYAIAQHRNWDRELDGLHSMIAY</sequence>